<gene>
    <name evidence="14 19" type="primary">SS1</name>
    <name evidence="15" type="synonym">GSS</name>
    <name evidence="14" type="synonym">PSS</name>
    <name evidence="16" type="synonym">SQS</name>
    <name evidence="20 22" type="synonym">SS</name>
    <name evidence="17" type="synonym">SS4</name>
    <name evidence="21" type="synonym">ssA</name>
</gene>
<accession>O48666</accession>
<accession>A0A1P7Y098</accession>
<accession>B1PX80</accession>
<organism>
    <name type="scientific">Panax ginseng</name>
    <name type="common">Korean ginseng</name>
    <dbReference type="NCBI Taxonomy" id="4054"/>
    <lineage>
        <taxon>Eukaryota</taxon>
        <taxon>Viridiplantae</taxon>
        <taxon>Streptophyta</taxon>
        <taxon>Embryophyta</taxon>
        <taxon>Tracheophyta</taxon>
        <taxon>Spermatophyta</taxon>
        <taxon>Magnoliopsida</taxon>
        <taxon>eudicotyledons</taxon>
        <taxon>Gunneridae</taxon>
        <taxon>Pentapetalae</taxon>
        <taxon>asterids</taxon>
        <taxon>campanulids</taxon>
        <taxon>Apiales</taxon>
        <taxon>Araliaceae</taxon>
        <taxon>Panax</taxon>
    </lineage>
</organism>
<proteinExistence type="evidence at transcript level"/>
<sequence length="415" mass="47056">MGSLGAILKHPEDFYPLLKLKFAARHAEKQIPPEPHWAFCYSMLHKVSRSFGLVIQQLGPQLRDAVCIFYLVLRALDTVEDDTSIPTEVKVPILMAFHRHIYDKDWHFSCGTKEYKVLMDEFHHVSNAFLELGSGYQEAIEDITMRMGAGMAKFICKEVETINDYDEYCHYVAGLVGLGLSKLFHASGAEDLATDSLSNSMGLFLQKTNIIRDYLEDINEIPKSRMFWPRQIWSKYVDKLEDLKYEENSAKAVQCLNDMVTDALVHAEDCLKYMSDLRGPAIFRFCAIPQIMAIGTLALCFNNTQVFRGVVKMRRGLTAKVIDQTKTMSDVYGAFFDFSCLLKSKVDNNDPNATKTLSRLEAIQKTCKESGTLSKRKSYIIESESGHNSALIAIIFIILAILYAYLSSNLLLNKQ</sequence>
<feature type="chain" id="PRO_0000446952" description="Squalene synthase 1">
    <location>
        <begin position="1"/>
        <end position="415"/>
    </location>
</feature>
<feature type="transmembrane region" description="Helical" evidence="2">
    <location>
        <begin position="281"/>
        <end position="301"/>
    </location>
</feature>
<feature type="transmembrane region" description="Helical" evidence="2">
    <location>
        <begin position="391"/>
        <end position="411"/>
    </location>
</feature>
<feature type="splice variant" id="VSP_060120" description="In isoform 2." evidence="23">
    <original>LLLNKQ</original>
    <variation>LPNSL</variation>
    <location>
        <begin position="410"/>
        <end position="415"/>
    </location>
</feature>
<feature type="sequence conflict" description="In Ref. 5; AJK30626." evidence="23" ref="5">
    <original>K</original>
    <variation>N</variation>
    <location>
        <position position="104"/>
    </location>
</feature>
<feature type="sequence conflict" description="In Ref. 3; ACA66014." evidence="23" ref="3">
    <original>S</original>
    <variation>P</variation>
    <location>
        <position position="196"/>
    </location>
</feature>
<feature type="sequence conflict" description="In Ref. 3; ACA66014." evidence="23" ref="3">
    <original>I</original>
    <variation>V</variation>
    <location>
        <position position="282"/>
    </location>
</feature>
<comment type="function">
    <text evidence="3 9 18">Component of the triterpene saponins (e.g. ginsenosides or panaxosides) and phytosterols biosynthetic pathways (PubMed:15356323, PubMed:27746309, PubMed:29378087). Catalyzes the biosynthesis of squalene (PubMed:15356323).</text>
</comment>
<comment type="catalytic activity">
    <reaction evidence="1">
        <text>2 (2E,6E)-farnesyl diphosphate + NADH + H(+) = squalene + 2 diphosphate + NAD(+)</text>
        <dbReference type="Rhea" id="RHEA:32299"/>
        <dbReference type="ChEBI" id="CHEBI:15378"/>
        <dbReference type="ChEBI" id="CHEBI:15440"/>
        <dbReference type="ChEBI" id="CHEBI:33019"/>
        <dbReference type="ChEBI" id="CHEBI:57540"/>
        <dbReference type="ChEBI" id="CHEBI:57945"/>
        <dbReference type="ChEBI" id="CHEBI:175763"/>
        <dbReference type="EC" id="2.5.1.21"/>
    </reaction>
    <physiologicalReaction direction="left-to-right" evidence="19">
        <dbReference type="Rhea" id="RHEA:32300"/>
    </physiologicalReaction>
</comment>
<comment type="catalytic activity">
    <reaction evidence="1">
        <text>2 (2E,6E)-farnesyl diphosphate + NADPH + H(+) = squalene + 2 diphosphate + NADP(+)</text>
        <dbReference type="Rhea" id="RHEA:32295"/>
        <dbReference type="ChEBI" id="CHEBI:15378"/>
        <dbReference type="ChEBI" id="CHEBI:15440"/>
        <dbReference type="ChEBI" id="CHEBI:33019"/>
        <dbReference type="ChEBI" id="CHEBI:57783"/>
        <dbReference type="ChEBI" id="CHEBI:58349"/>
        <dbReference type="ChEBI" id="CHEBI:175763"/>
        <dbReference type="EC" id="2.5.1.21"/>
    </reaction>
    <physiologicalReaction direction="left-to-right" evidence="19">
        <dbReference type="Rhea" id="RHEA:32296"/>
    </physiologicalReaction>
</comment>
<comment type="cofactor">
    <cofactor evidence="1">
        <name>Mg(2+)</name>
        <dbReference type="ChEBI" id="CHEBI:18420"/>
    </cofactor>
    <cofactor evidence="1">
        <name>Mn(2+)</name>
        <dbReference type="ChEBI" id="CHEBI:29035"/>
    </cofactor>
</comment>
<comment type="pathway">
    <text evidence="1">Terpene metabolism; lanosterol biosynthesis; lanosterol from farnesyl diphosphate: step 1/3.</text>
</comment>
<comment type="subcellular location">
    <subcellularLocation>
        <location evidence="1">Endoplasmic reticulum membrane</location>
        <topology evidence="2">Multi-pass membrane protein</topology>
    </subcellularLocation>
</comment>
<comment type="alternative products">
    <event type="alternative splicing"/>
    <isoform>
        <id>O48666-1</id>
        <name>1</name>
        <sequence type="displayed"/>
    </isoform>
    <isoform>
        <id>O48666-2</id>
        <name>2</name>
        <sequence type="described" ref="VSP_060120"/>
    </isoform>
</comment>
<comment type="tissue specificity">
    <text evidence="3 10">Mostly expressed in the shoot apex (buds) and roots, and, to a lower extent, in stems, leaves, flowers and seeds.</text>
</comment>
<comment type="developmental stage">
    <text evidence="10">Rapid decrease in leaves from the leaf opened to the green fruit stage (PubMed:30577538). At the leaf opened stage, accumulates mostly in leaves (PubMed:30577538).</text>
</comment>
<comment type="induction">
    <text evidence="3 4 5 6 7 8 9 10 11 12 13">Induced by jasmonic acid (JA) and methyl jasmonate (MeJA) in adventitious roots (PubMed:15356323, PubMed:15538577, PubMed:25642758, Ref.10, Ref.6). Induced by chitosan (CHN) (PubMed:15493471). Accumulates upon Cle-mediated signaling, an elicitor derived from fungal cell walls of C.lagenarium, thus inducing the accumulation of saponins (PubMed:15821288). Triggered by ethylene (ACC), rose bengal (RB), nitric oxide (NO) (PubMed:15821288). Accumulates in response to hydrogen peroxide (H(2)O(2)) (PubMed:15821288, Ref.6). Induced by N,N'-dicyclohexylcarbodiimide (DCCD) in a nitric oxide (NO) dependent manner thus leading to increased ginsenosides accumulation (PubMed:23467002). Induced by A.niger mycelium-derived elicitor, thus improving ginsenosides production in adventitious roots culture (PubMed:27746309). Triggered by vanadate (Ref.12). Stimulated by the plant cell wall-derived elicitor oligogalacturonic acid (Ref.6). Influenced in roots by photosynthetically active radiation (PAR), and in leaves by relative humidity (PubMed:30577538).</text>
</comment>
<comment type="similarity">
    <text evidence="23">Belongs to the phytoene/squalene synthase family.</text>
</comment>
<protein>
    <recommendedName>
        <fullName evidence="14 19">Squalene synthase 1</fullName>
        <shortName evidence="15">PgSS</shortName>
        <shortName evidence="14 19">PgSS1</shortName>
        <shortName evidence="21">PgssA</shortName>
        <shortName evidence="23">SQS 1</shortName>
        <shortName evidence="17 22">SQS 4</shortName>
        <ecNumber evidence="1">2.5.1.21</ecNumber>
    </recommendedName>
    <alternativeName>
        <fullName evidence="23">FPP:FPP farnesyltransferase SS1</fullName>
    </alternativeName>
    <alternativeName>
        <fullName evidence="23">Farnesyl-diphosphate farnesyltransferase SS1</fullName>
    </alternativeName>
</protein>
<dbReference type="EC" id="2.5.1.21" evidence="1"/>
<dbReference type="EMBL" id="AB010148">
    <property type="protein sequence ID" value="BAA24289.1"/>
    <property type="molecule type" value="mRNA"/>
</dbReference>
<dbReference type="EMBL" id="AB115496">
    <property type="protein sequence ID" value="BAD08242.1"/>
    <property type="molecule type" value="mRNA"/>
</dbReference>
<dbReference type="EMBL" id="EU502717">
    <property type="protein sequence ID" value="ACA66014.1"/>
    <property type="molecule type" value="mRNA"/>
</dbReference>
<dbReference type="EMBL" id="KJ939264">
    <property type="protein sequence ID" value="AJV26445.1"/>
    <property type="molecule type" value="mRNA"/>
</dbReference>
<dbReference type="EMBL" id="KP689314">
    <property type="protein sequence ID" value="AJK30626.1"/>
    <property type="molecule type" value="mRNA"/>
</dbReference>
<dbReference type="SMR" id="O48666"/>
<dbReference type="BioCyc" id="MetaCyc:MONOMER-13442"/>
<dbReference type="BRENDA" id="2.5.1.21">
    <property type="organism ID" value="7895"/>
</dbReference>
<dbReference type="UniPathway" id="UPA00767">
    <property type="reaction ID" value="UER00751"/>
</dbReference>
<dbReference type="GO" id="GO:0005789">
    <property type="term" value="C:endoplasmic reticulum membrane"/>
    <property type="evidence" value="ECO:0007669"/>
    <property type="project" value="UniProtKB-SubCell"/>
</dbReference>
<dbReference type="GO" id="GO:0051996">
    <property type="term" value="F:squalene synthase [NAD(P)H] activity"/>
    <property type="evidence" value="ECO:0007669"/>
    <property type="project" value="UniProtKB-EC"/>
</dbReference>
<dbReference type="GO" id="GO:0045338">
    <property type="term" value="P:farnesyl diphosphate metabolic process"/>
    <property type="evidence" value="ECO:0007669"/>
    <property type="project" value="InterPro"/>
</dbReference>
<dbReference type="GO" id="GO:0009723">
    <property type="term" value="P:response to ethylene"/>
    <property type="evidence" value="ECO:0000270"/>
    <property type="project" value="UniProtKB"/>
</dbReference>
<dbReference type="GO" id="GO:0042542">
    <property type="term" value="P:response to hydrogen peroxide"/>
    <property type="evidence" value="ECO:0000270"/>
    <property type="project" value="UniProtKB"/>
</dbReference>
<dbReference type="GO" id="GO:0009753">
    <property type="term" value="P:response to jasmonic acid"/>
    <property type="evidence" value="ECO:0000270"/>
    <property type="project" value="UniProtKB"/>
</dbReference>
<dbReference type="GO" id="GO:0002238">
    <property type="term" value="P:response to molecule of fungal origin"/>
    <property type="evidence" value="ECO:0000270"/>
    <property type="project" value="UniProtKB"/>
</dbReference>
<dbReference type="GO" id="GO:0071731">
    <property type="term" value="P:response to nitric oxide"/>
    <property type="evidence" value="ECO:0000270"/>
    <property type="project" value="UniProtKB"/>
</dbReference>
<dbReference type="GO" id="GO:0009751">
    <property type="term" value="P:response to salicylic acid"/>
    <property type="evidence" value="ECO:0000270"/>
    <property type="project" value="UniProtKB"/>
</dbReference>
<dbReference type="GO" id="GO:1902438">
    <property type="term" value="P:response to vanadate(3-)"/>
    <property type="evidence" value="ECO:0000270"/>
    <property type="project" value="UniProtKB"/>
</dbReference>
<dbReference type="GO" id="GO:0016135">
    <property type="term" value="P:saponin biosynthetic process"/>
    <property type="evidence" value="ECO:0000314"/>
    <property type="project" value="UniProtKB"/>
</dbReference>
<dbReference type="GO" id="GO:0016104">
    <property type="term" value="P:triterpenoid biosynthetic process"/>
    <property type="evidence" value="ECO:0000314"/>
    <property type="project" value="UniProtKB"/>
</dbReference>
<dbReference type="CDD" id="cd00683">
    <property type="entry name" value="Trans_IPPS_HH"/>
    <property type="match status" value="1"/>
</dbReference>
<dbReference type="FunFam" id="1.10.600.10:FF:000012">
    <property type="entry name" value="Squalene synthase 1"/>
    <property type="match status" value="1"/>
</dbReference>
<dbReference type="Gene3D" id="1.10.600.10">
    <property type="entry name" value="Farnesyl Diphosphate Synthase"/>
    <property type="match status" value="1"/>
</dbReference>
<dbReference type="InterPro" id="IPR008949">
    <property type="entry name" value="Isoprenoid_synthase_dom_sf"/>
</dbReference>
<dbReference type="InterPro" id="IPR002060">
    <property type="entry name" value="Squ/phyt_synthse"/>
</dbReference>
<dbReference type="InterPro" id="IPR006449">
    <property type="entry name" value="Squal_synth-like"/>
</dbReference>
<dbReference type="InterPro" id="IPR019845">
    <property type="entry name" value="Squalene/phytoene_synthase_CS"/>
</dbReference>
<dbReference type="InterPro" id="IPR044844">
    <property type="entry name" value="Trans_IPPS_euk-type"/>
</dbReference>
<dbReference type="InterPro" id="IPR033904">
    <property type="entry name" value="Trans_IPPS_HH"/>
</dbReference>
<dbReference type="NCBIfam" id="TIGR01559">
    <property type="entry name" value="squal_synth"/>
    <property type="match status" value="1"/>
</dbReference>
<dbReference type="PANTHER" id="PTHR11626">
    <property type="entry name" value="FARNESYL-DIPHOSPHATE FARNESYLTRANSFERASE"/>
    <property type="match status" value="1"/>
</dbReference>
<dbReference type="PANTHER" id="PTHR11626:SF2">
    <property type="entry name" value="SQUALENE SYNTHASE"/>
    <property type="match status" value="1"/>
</dbReference>
<dbReference type="Pfam" id="PF00494">
    <property type="entry name" value="SQS_PSY"/>
    <property type="match status" value="1"/>
</dbReference>
<dbReference type="SFLD" id="SFLDS00005">
    <property type="entry name" value="Isoprenoid_Synthase_Type_I"/>
    <property type="match status" value="1"/>
</dbReference>
<dbReference type="SFLD" id="SFLDG01018">
    <property type="entry name" value="Squalene/Phytoene_Synthase_Lik"/>
    <property type="match status" value="1"/>
</dbReference>
<dbReference type="SUPFAM" id="SSF48576">
    <property type="entry name" value="Terpenoid synthases"/>
    <property type="match status" value="1"/>
</dbReference>
<dbReference type="PROSITE" id="PS01044">
    <property type="entry name" value="SQUALEN_PHYTOEN_SYN_1"/>
    <property type="match status" value="1"/>
</dbReference>
<dbReference type="PROSITE" id="PS01045">
    <property type="entry name" value="SQUALEN_PHYTOEN_SYN_2"/>
    <property type="match status" value="1"/>
</dbReference>
<reference key="1">
    <citation type="submission" date="1998-01" db="EMBL/GenBank/DDBJ databases">
        <title>Isolation and characterization of a cDNA encoding the squalene synthase from Panax ginseng.</title>
        <authorList>
            <person name="Suzuki H."/>
        </authorList>
    </citation>
    <scope>NUCLEOTIDE SEQUENCE [MRNA] (ISOFORM 1)</scope>
</reference>
<reference key="2">
    <citation type="journal article" date="2004" name="Plant Cell Physiol.">
        <title>Enhanced triterpene and phytosterol biosynthesis in Panax ginseng overexpressing squalene synthase gene.</title>
        <authorList>
            <person name="Lee M.-H."/>
            <person name="Jeong J.-H."/>
            <person name="Seo J.-W."/>
            <person name="Shin C.-G."/>
            <person name="Kim Y.-S."/>
            <person name="In J.-G."/>
            <person name="Yang D.-C."/>
            <person name="Yi J.-S."/>
            <person name="Choi Y.-E."/>
        </authorList>
    </citation>
    <scope>NUCLEOTIDE SEQUENCE [MRNA] (ISOFORM 1)</scope>
    <scope>FUNCTION</scope>
    <scope>TISSUE SPECIFICITY</scope>
    <scope>INDUCTION BY METHYL JASMONATE</scope>
    <source>
        <strain>cv. Chunpoong</strain>
        <tissue>Leaf</tissue>
    </source>
</reference>
<reference key="3">
    <citation type="submission" date="2008-02" db="EMBL/GenBank/DDBJ databases">
        <authorList>
            <person name="Zhao L."/>
            <person name="Fu Q."/>
            <person name="Wang L.S."/>
        </authorList>
    </citation>
    <scope>NUCLEOTIDE SEQUENCE [MRNA] (ISOFORM 1)</scope>
    <source>
        <tissue>Leaf</tissue>
    </source>
</reference>
<reference key="4">
    <citation type="submission" date="2014-06" db="EMBL/GenBank/DDBJ databases">
        <title>Cloning and expression analysis of HMGR, SS, SE, DS, and bAS genes in Panax ginseng.</title>
        <authorList>
            <person name="Hou S."/>
            <person name="Han M."/>
            <person name="Liu C."/>
            <person name="Yang L."/>
        </authorList>
    </citation>
    <scope>NUCLEOTIDE SEQUENCE [MRNA] (ISOFORM 1)</scope>
</reference>
<reference key="5">
    <citation type="journal article" date="2015" name="Int. J. Mol. Sci.">
        <title>Transcriptome analysis of methyl jasmonate-elicited Panax ginseng adventitious roots to discover putative ginsenoside biosynthesis and transport genes.</title>
        <authorList>
            <person name="Cao H."/>
            <person name="Nuruzzaman M."/>
            <person name="Xiu H."/>
            <person name="Huang J."/>
            <person name="Wu K."/>
            <person name="Chen X."/>
            <person name="Li J."/>
            <person name="Wang L."/>
            <person name="Jeong J.-H."/>
            <person name="Park S.-J."/>
            <person name="Yang F."/>
            <person name="Luo J."/>
            <person name="Luo Z."/>
        </authorList>
    </citation>
    <scope>NUCLEOTIDE SEQUENCE [LARGE SCALE MRNA] (ISOFORM 2)</scope>
    <scope>INDUCTION BY METHYL JASMONATE</scope>
    <source>
        <strain>cv. Damaya</strain>
    </source>
</reference>
<reference key="6">
    <citation type="journal article" date="2003" name="Physiol. Plantarum">
        <title>Hydrogen peroxide and jasmonic acid mediate oligogalacturonic acid-induced saponin accumulation in suspension-cultured cells of Panax ginseng.</title>
        <authorList>
            <person name="Hu X."/>
            <person name="Neill S."/>
            <person name="Cai W."/>
            <person name="Tang Z."/>
        </authorList>
    </citation>
    <scope>INDUCTION BY OLIGOGALACTURONIC ACID; HYDROGEN PEROXIDE AND JASMONIC ACID</scope>
</reference>
<reference key="7">
    <citation type="journal article" date="2004" name="Sci. China, Ser. C, Life Sci.">
        <title>Mitogen-activated protein kinases mediate the oxidative burst and saponin synthesis induced by chitosan in cell cultures of Panax ginseng.</title>
        <authorList>
            <person name="Hu X."/>
            <person name="Neill S.J."/>
            <person name="Fang J."/>
            <person name="Cai W."/>
            <person name="Tang Z."/>
        </authorList>
    </citation>
    <scope>INDUCTION BY CHITOSAN</scope>
</reference>
<reference key="8">
    <citation type="journal article" date="2005" name="Plant Cell Physiol.">
        <title>Fungal elicitor induces singlet oxygen generation, ethylene release and saponin synthesis in cultured cells of Panax ginseng C. A. Meyer.</title>
        <authorList>
            <person name="Xu X."/>
            <person name="Hu X."/>
            <person name="Neill S.J."/>
            <person name="Fang J."/>
            <person name="Cai W."/>
        </authorList>
    </citation>
    <scope>INDUCTION BY CLE; ETHYLENE; ROSE BENGAL; NITRIC OXIDE AND HYDROGEN PEROXIDE</scope>
</reference>
<reference key="9">
    <citation type="journal article" date="2005" name="Plant Cell Rep.">
        <title>Analysis of transcripts in methyl jasmonate-treated ginseng hairy roots to identify genes involved in the biosynthesis of ginsenosides and other secondary metabolites.</title>
        <authorList>
            <person name="Choi D.-W."/>
            <person name="Jung J."/>
            <person name="Ha Y.I."/>
            <person name="Park H.-W."/>
            <person name="In D.S."/>
            <person name="Chung H.-J."/>
            <person name="Liu J.R."/>
        </authorList>
    </citation>
    <scope>INDUCTION BY METHYL JASMONATE</scope>
</reference>
<reference key="10">
    <citation type="journal article" date="2009" name="Plant Cell Tissue Organ Cult.">
        <title>Upregulation of ginsenoside and gene expression related to triterpene biosynthesis in ginseng hairy root cultures elicited by methyl jasmonate.</title>
        <authorList>
            <person name="Kim O.T."/>
            <person name="Bang K.H."/>
            <person name="Kim Y.C."/>
            <person name="Hyun D.Y."/>
            <person name="Kim M.Y."/>
            <person name="Cha S.W."/>
        </authorList>
    </citation>
    <scope>INDUCTION BY METHYL JASMONATE</scope>
</reference>
<reference key="11">
    <citation type="journal article" date="2013" name="J. Biotechnol.">
        <title>Enhancement of ginsenoside biosynthesis in cell cultures of Panax ginseng by N,N'-dicyclohexylcarbodiimide elicitation.</title>
        <authorList>
            <person name="Huang C."/>
            <person name="Qian Z.-G."/>
            <person name="Zhong J.-J."/>
        </authorList>
    </citation>
    <scope>INDUCTION BY DCCD</scope>
</reference>
<reference key="12">
    <citation type="journal article" date="2013" name="Process Biochem.">
        <title>Elicitation of ginsenoside biosynthesis in cell cultures of Panax ginseng by vanadate.</title>
        <authorList>
            <person name="Huang C."/>
            <person name="Zhong J.-J."/>
        </authorList>
    </citation>
    <scope>INDUCTION BY VANADATE</scope>
</reference>
<reference key="13">
    <citation type="journal article" date="2016" name="J. Biotechnol.">
        <title>Fungal elicitors enhance ginsenosides biosynthesis, expression of functional genes as well as signal molecules accumulation in adventitious roots of Panax ginseng C. A. Mey.</title>
        <authorList>
            <person name="Li J."/>
            <person name="Liu S."/>
            <person name="Wang J."/>
            <person name="Li J."/>
            <person name="Liu D."/>
            <person name="Li J."/>
            <person name="Gao W."/>
        </authorList>
    </citation>
    <scope>FUNCTION</scope>
    <scope>INDUCTION BY ASPERGILLUS NIGER</scope>
</reference>
<reference key="14">
    <citation type="journal article" date="2018" name="Biotechnol. Appl. Biochem.">
        <title>Advances in ginsenoside biosynthesis and metabolic regulation.</title>
        <authorList>
            <person name="Lu J."/>
            <person name="Li J."/>
            <person name="Wang S."/>
            <person name="Yao L."/>
            <person name="Liang W."/>
            <person name="Wang J."/>
            <person name="Gao W."/>
        </authorList>
    </citation>
    <scope>REVIEW</scope>
</reference>
<reference key="15">
    <citation type="journal article" date="2018" name="Molecules">
        <title>Progress on the studies of the key enzymes of ginsenoside biosynthesis.</title>
        <authorList>
            <person name="Yang J.-L."/>
            <person name="Hu Z.-F."/>
            <person name="Zhang T.-T."/>
            <person name="Gu A.-D."/>
            <person name="Gong T."/>
            <person name="Zhu P."/>
        </authorList>
    </citation>
    <scope>REVIEW</scope>
    <scope>NOMENCLATURE</scope>
</reference>
<reference key="16">
    <citation type="journal article" date="2018" name="Molecules">
        <title>The effects of environmental factors on ginsenoside biosynthetic enzyme gene expression and saponin abundance.</title>
        <authorList>
            <person name="Zhang T."/>
            <person name="Han M."/>
            <person name="Yang L."/>
            <person name="Han Z."/>
            <person name="Cheng L."/>
            <person name="Sun Z."/>
            <person name="Yang L."/>
        </authorList>
    </citation>
    <scope>DEVELOPMENTAL STAGE</scope>
    <scope>TISSUE SPECIFICITY</scope>
    <scope>INDUCTION BY ABIOTIC FACTORS</scope>
</reference>
<name>SQS1_PANGI</name>
<evidence type="ECO:0000250" key="1">
    <source>
        <dbReference type="UniProtKB" id="P53799"/>
    </source>
</evidence>
<evidence type="ECO:0000255" key="2"/>
<evidence type="ECO:0000269" key="3">
    <source>
    </source>
</evidence>
<evidence type="ECO:0000269" key="4">
    <source>
    </source>
</evidence>
<evidence type="ECO:0000269" key="5">
    <source>
    </source>
</evidence>
<evidence type="ECO:0000269" key="6">
    <source>
    </source>
</evidence>
<evidence type="ECO:0000269" key="7">
    <source>
    </source>
</evidence>
<evidence type="ECO:0000269" key="8">
    <source>
    </source>
</evidence>
<evidence type="ECO:0000269" key="9">
    <source>
    </source>
</evidence>
<evidence type="ECO:0000269" key="10">
    <source>
    </source>
</evidence>
<evidence type="ECO:0000269" key="11">
    <source ref="10"/>
</evidence>
<evidence type="ECO:0000269" key="12">
    <source ref="12"/>
</evidence>
<evidence type="ECO:0000269" key="13">
    <source ref="6"/>
</evidence>
<evidence type="ECO:0000303" key="14">
    <source>
    </source>
</evidence>
<evidence type="ECO:0000303" key="15">
    <source>
    </source>
</evidence>
<evidence type="ECO:0000303" key="16">
    <source>
    </source>
</evidence>
<evidence type="ECO:0000303" key="17">
    <source>
    </source>
</evidence>
<evidence type="ECO:0000303" key="18">
    <source>
    </source>
</evidence>
<evidence type="ECO:0000303" key="19">
    <source>
    </source>
</evidence>
<evidence type="ECO:0000303" key="20">
    <source>
    </source>
</evidence>
<evidence type="ECO:0000303" key="21">
    <source ref="3"/>
</evidence>
<evidence type="ECO:0000303" key="22">
    <source ref="4"/>
</evidence>
<evidence type="ECO:0000305" key="23"/>
<keyword id="KW-0025">Alternative splicing</keyword>
<keyword id="KW-0256">Endoplasmic reticulum</keyword>
<keyword id="KW-0414">Isoprene biosynthesis</keyword>
<keyword id="KW-0460">Magnesium</keyword>
<keyword id="KW-0472">Membrane</keyword>
<keyword id="KW-0511">Multifunctional enzyme</keyword>
<keyword id="KW-0521">NADP</keyword>
<keyword id="KW-0808">Transferase</keyword>
<keyword id="KW-0812">Transmembrane</keyword>
<keyword id="KW-1133">Transmembrane helix</keyword>